<dbReference type="EMBL" id="CP001022">
    <property type="protein sequence ID" value="ACB60161.1"/>
    <property type="molecule type" value="Genomic_DNA"/>
</dbReference>
<dbReference type="RefSeq" id="WP_012369585.1">
    <property type="nucleotide sequence ID" value="NC_010556.1"/>
</dbReference>
<dbReference type="SMR" id="B1YK80"/>
<dbReference type="STRING" id="262543.Exig_0680"/>
<dbReference type="KEGG" id="esi:Exig_0680"/>
<dbReference type="eggNOG" id="COG4399">
    <property type="taxonomic scope" value="Bacteria"/>
</dbReference>
<dbReference type="HOGENOM" id="CLU_042384_0_0_9"/>
<dbReference type="OrthoDB" id="9787430at2"/>
<dbReference type="Proteomes" id="UP000001681">
    <property type="component" value="Chromosome"/>
</dbReference>
<dbReference type="GO" id="GO:0005886">
    <property type="term" value="C:plasma membrane"/>
    <property type="evidence" value="ECO:0007669"/>
    <property type="project" value="UniProtKB-SubCell"/>
</dbReference>
<dbReference type="InterPro" id="IPR007383">
    <property type="entry name" value="DUF445"/>
</dbReference>
<dbReference type="PANTHER" id="PTHR35791">
    <property type="entry name" value="UPF0754 MEMBRANE PROTEIN YHEB"/>
    <property type="match status" value="1"/>
</dbReference>
<dbReference type="PANTHER" id="PTHR35791:SF1">
    <property type="entry name" value="UPF0754 MEMBRANE PROTEIN YHEB"/>
    <property type="match status" value="1"/>
</dbReference>
<dbReference type="Pfam" id="PF04286">
    <property type="entry name" value="DUF445"/>
    <property type="match status" value="1"/>
</dbReference>
<feature type="chain" id="PRO_0000388291" description="UPF0754 membrane protein Exig_0680">
    <location>
        <begin position="1"/>
        <end position="378"/>
    </location>
</feature>
<feature type="transmembrane region" description="Helical" evidence="2">
    <location>
        <begin position="5"/>
        <end position="25"/>
    </location>
</feature>
<feature type="transmembrane region" description="Helical" evidence="2">
    <location>
        <begin position="357"/>
        <end position="377"/>
    </location>
</feature>
<evidence type="ECO:0000250" key="1"/>
<evidence type="ECO:0000255" key="2"/>
<evidence type="ECO:0000305" key="3"/>
<comment type="subcellular location">
    <subcellularLocation>
        <location evidence="1">Cell membrane</location>
        <topology evidence="1">Multi-pass membrane protein</topology>
    </subcellularLocation>
</comment>
<comment type="similarity">
    <text evidence="3">Belongs to the UPF0754 family.</text>
</comment>
<gene>
    <name type="ordered locus">Exig_0680</name>
</gene>
<sequence>MQVEVDLVIKMIGMIVIGALIGAVTNHLAIRMLFRPLEAKYIGKYRIPFTPGLIPKRRDELAANLGRTVVKHLLTPEGISKRLQQPIVYQAITRMIQQEVQKWTRSTKTIREIAERFVANPEGKLQQQIEQRIDQELESMAVAIKTARLTEVLGEGGTTKIKTAIPGMVEVLLHQTEQYFDSPAGKMKLEETVAQFIQSKLGGGMFGMLLANVNIVEMIQPELKRVIQGKSTHQFISEMVEQEVHTLLERTVGSLLEPEAERQIIERMKSEIVTRIPLAALLDTPLHEFLEPLEVRISQEMVPMLSKQMVNRLIEQVEQIMATLDLETIVREEVDLLDTAYLEEIVLSISRREFRAITWLGGLLGGLIGMIQAILLIV</sequence>
<protein>
    <recommendedName>
        <fullName>UPF0754 membrane protein Exig_0680</fullName>
    </recommendedName>
</protein>
<accession>B1YK80</accession>
<organism>
    <name type="scientific">Exiguobacterium sibiricum (strain DSM 17290 / CCUG 55495 / CIP 109462 / JCM 13490 / 255-15)</name>
    <dbReference type="NCBI Taxonomy" id="262543"/>
    <lineage>
        <taxon>Bacteria</taxon>
        <taxon>Bacillati</taxon>
        <taxon>Bacillota</taxon>
        <taxon>Bacilli</taxon>
        <taxon>Bacillales</taxon>
        <taxon>Bacillales Family XII. Incertae Sedis</taxon>
        <taxon>Exiguobacterium</taxon>
    </lineage>
</organism>
<reference key="1">
    <citation type="submission" date="2008-04" db="EMBL/GenBank/DDBJ databases">
        <title>Complete sequence of chromosome of Exiguobacterium sibiricum 255-15.</title>
        <authorList>
            <consortium name="US DOE Joint Genome Institute"/>
            <person name="Copeland A."/>
            <person name="Lucas S."/>
            <person name="Lapidus A."/>
            <person name="Glavina del Rio T."/>
            <person name="Dalin E."/>
            <person name="Tice H."/>
            <person name="Bruce D."/>
            <person name="Goodwin L."/>
            <person name="Pitluck S."/>
            <person name="Kiss H."/>
            <person name="Chertkov O."/>
            <person name="Monk C."/>
            <person name="Brettin T."/>
            <person name="Detter J.C."/>
            <person name="Han C."/>
            <person name="Kuske C.R."/>
            <person name="Schmutz J."/>
            <person name="Larimer F."/>
            <person name="Land M."/>
            <person name="Hauser L."/>
            <person name="Kyrpides N."/>
            <person name="Mikhailova N."/>
            <person name="Vishnivetskaya T."/>
            <person name="Rodrigues D.F."/>
            <person name="Gilichinsky D."/>
            <person name="Tiedje J."/>
            <person name="Richardson P."/>
        </authorList>
    </citation>
    <scope>NUCLEOTIDE SEQUENCE [LARGE SCALE GENOMIC DNA]</scope>
    <source>
        <strain>DSM 17290 / CCUG 55495 / CIP 109462 / JCM 13490 / 255-15</strain>
    </source>
</reference>
<keyword id="KW-1003">Cell membrane</keyword>
<keyword id="KW-0472">Membrane</keyword>
<keyword id="KW-1185">Reference proteome</keyword>
<keyword id="KW-0812">Transmembrane</keyword>
<keyword id="KW-1133">Transmembrane helix</keyword>
<name>Y680_EXIS2</name>
<proteinExistence type="inferred from homology"/>